<keyword id="KW-0004">4Fe-4S</keyword>
<keyword id="KW-0408">Iron</keyword>
<keyword id="KW-0411">Iron-sulfur</keyword>
<keyword id="KW-0479">Metal-binding</keyword>
<keyword id="KW-1185">Reference proteome</keyword>
<organism>
    <name type="scientific">Aspergillus oryzae (strain ATCC 42149 / RIB 40)</name>
    <name type="common">Yellow koji mold</name>
    <dbReference type="NCBI Taxonomy" id="510516"/>
    <lineage>
        <taxon>Eukaryota</taxon>
        <taxon>Fungi</taxon>
        <taxon>Dikarya</taxon>
        <taxon>Ascomycota</taxon>
        <taxon>Pezizomycotina</taxon>
        <taxon>Eurotiomycetes</taxon>
        <taxon>Eurotiomycetidae</taxon>
        <taxon>Eurotiales</taxon>
        <taxon>Aspergillaceae</taxon>
        <taxon>Aspergillus</taxon>
        <taxon>Aspergillus subgen. Circumdati</taxon>
    </lineage>
</organism>
<reference key="1">
    <citation type="journal article" date="2005" name="Nature">
        <title>Genome sequencing and analysis of Aspergillus oryzae.</title>
        <authorList>
            <person name="Machida M."/>
            <person name="Asai K."/>
            <person name="Sano M."/>
            <person name="Tanaka T."/>
            <person name="Kumagai T."/>
            <person name="Terai G."/>
            <person name="Kusumoto K."/>
            <person name="Arima T."/>
            <person name="Akita O."/>
            <person name="Kashiwagi Y."/>
            <person name="Abe K."/>
            <person name="Gomi K."/>
            <person name="Horiuchi H."/>
            <person name="Kitamoto K."/>
            <person name="Kobayashi T."/>
            <person name="Takeuchi M."/>
            <person name="Denning D.W."/>
            <person name="Galagan J.E."/>
            <person name="Nierman W.C."/>
            <person name="Yu J."/>
            <person name="Archer D.B."/>
            <person name="Bennett J.W."/>
            <person name="Bhatnagar D."/>
            <person name="Cleveland T.E."/>
            <person name="Fedorova N.D."/>
            <person name="Gotoh O."/>
            <person name="Horikawa H."/>
            <person name="Hosoyama A."/>
            <person name="Ichinomiya M."/>
            <person name="Igarashi R."/>
            <person name="Iwashita K."/>
            <person name="Juvvadi P.R."/>
            <person name="Kato M."/>
            <person name="Kato Y."/>
            <person name="Kin T."/>
            <person name="Kokubun A."/>
            <person name="Maeda H."/>
            <person name="Maeyama N."/>
            <person name="Maruyama J."/>
            <person name="Nagasaki H."/>
            <person name="Nakajima T."/>
            <person name="Oda K."/>
            <person name="Okada K."/>
            <person name="Paulsen I."/>
            <person name="Sakamoto K."/>
            <person name="Sawano T."/>
            <person name="Takahashi M."/>
            <person name="Takase K."/>
            <person name="Terabayashi Y."/>
            <person name="Wortman J.R."/>
            <person name="Yamada O."/>
            <person name="Yamagata Y."/>
            <person name="Anazawa H."/>
            <person name="Hata Y."/>
            <person name="Koide Y."/>
            <person name="Komori T."/>
            <person name="Koyama Y."/>
            <person name="Minetoki T."/>
            <person name="Suharnan S."/>
            <person name="Tanaka A."/>
            <person name="Isono K."/>
            <person name="Kuhara S."/>
            <person name="Ogasawara N."/>
            <person name="Kikuchi H."/>
        </authorList>
    </citation>
    <scope>NUCLEOTIDE SEQUENCE [LARGE SCALE GENOMIC DNA]</scope>
    <source>
        <strain>ATCC 42149 / RIB 40</strain>
    </source>
</reference>
<name>NAR1_ASPOR</name>
<feature type="chain" id="PRO_0000383718" description="Cytosolic Fe-S cluster assembly factor nar1">
    <location>
        <begin position="1"/>
        <end position="607"/>
    </location>
</feature>
<feature type="region of interest" description="Disordered" evidence="3">
    <location>
        <begin position="28"/>
        <end position="47"/>
    </location>
</feature>
<feature type="region of interest" description="Disordered" evidence="3">
    <location>
        <begin position="439"/>
        <end position="461"/>
    </location>
</feature>
<feature type="region of interest" description="Disordered" evidence="3">
    <location>
        <begin position="494"/>
        <end position="513"/>
    </location>
</feature>
<feature type="compositionally biased region" description="Polar residues" evidence="3">
    <location>
        <begin position="29"/>
        <end position="40"/>
    </location>
</feature>
<feature type="compositionally biased region" description="Polar residues" evidence="3">
    <location>
        <begin position="452"/>
        <end position="461"/>
    </location>
</feature>
<feature type="compositionally biased region" description="Polar residues" evidence="3">
    <location>
        <begin position="494"/>
        <end position="505"/>
    </location>
</feature>
<feature type="binding site" evidence="2">
    <location>
        <position position="20"/>
    </location>
    <ligand>
        <name>[4Fe-4S] cluster</name>
        <dbReference type="ChEBI" id="CHEBI:49883"/>
        <label>1</label>
    </ligand>
</feature>
<feature type="binding site" evidence="2">
    <location>
        <position position="62"/>
    </location>
    <ligand>
        <name>[4Fe-4S] cluster</name>
        <dbReference type="ChEBI" id="CHEBI:49883"/>
        <label>1</label>
    </ligand>
</feature>
<feature type="binding site" evidence="2">
    <location>
        <position position="65"/>
    </location>
    <ligand>
        <name>[4Fe-4S] cluster</name>
        <dbReference type="ChEBI" id="CHEBI:49883"/>
        <label>1</label>
    </ligand>
</feature>
<feature type="binding site" evidence="2">
    <location>
        <position position="68"/>
    </location>
    <ligand>
        <name>[4Fe-4S] cluster</name>
        <dbReference type="ChEBI" id="CHEBI:49883"/>
        <label>1</label>
    </ligand>
</feature>
<feature type="binding site" evidence="2">
    <location>
        <position position="214"/>
    </location>
    <ligand>
        <name>[4Fe-4S] cluster</name>
        <dbReference type="ChEBI" id="CHEBI:49883"/>
        <label>2</label>
    </ligand>
</feature>
<feature type="binding site" evidence="2">
    <location>
        <position position="269"/>
    </location>
    <ligand>
        <name>[4Fe-4S] cluster</name>
        <dbReference type="ChEBI" id="CHEBI:49883"/>
        <label>2</label>
    </ligand>
</feature>
<feature type="binding site" evidence="2">
    <location>
        <position position="475"/>
    </location>
    <ligand>
        <name>[4Fe-4S] cluster</name>
        <dbReference type="ChEBI" id="CHEBI:49883"/>
        <label>2</label>
    </ligand>
</feature>
<feature type="binding site" evidence="2">
    <location>
        <position position="479"/>
    </location>
    <ligand>
        <name>[4Fe-4S] cluster</name>
        <dbReference type="ChEBI" id="CHEBI:49883"/>
        <label>2</label>
    </ligand>
</feature>
<protein>
    <recommendedName>
        <fullName>Cytosolic Fe-S cluster assembly factor nar1</fullName>
    </recommendedName>
    <alternativeName>
        <fullName>Nuclear architecture-related protein 1</fullName>
    </alternativeName>
</protein>
<gene>
    <name type="primary">nar1</name>
    <name type="ORF">AO090003001020</name>
</gene>
<accession>Q2UJY8</accession>
<sequence length="607" mass="65494">MSAILSADDLNDFISPGVACIKPVETLPKNESSNSQNPYEVTTEDKVQPENLPPAQISLTDCLACSGCVTSAEAVLISLQSHAEVLNTLDAYPELPLTQNHNGPYTGSSDALDGESRIFVASVSPQVRASLAATYGISEKEATYMIDQFLSGPHGLRAGGKHGSGFSWVVDTNVMRDAILVLTADEVSETLKEPSARAISKDTLPKRPVLSSACPGWICYAEKTHPFVLPHLSRLKSPQALTGTFLKTVLSKALGVPPSRVWHLAIMPCFDKKLEASREELTDVSWSPLDGGVPLTESNKPVRDVDCVITTRELLTLASSRGISLPTLPLKSLAPSYTPHFPDETLNAFLFRKQNGSEQSMEAGTSGGYLHHVLKTFQAKNPGSEIVTQRGRNADVVEYSLMSPGGEPLMKAARYYGFRNIQNLVRKLKPARVSRLPGARVPAASAGGNRRQPISRNSASAGSGTDFAYVEVMACPGGCTNGGGQIRIEDAREASTSTQSVTAVENPSKPTPHEQRAWLARVDEAYFSAESDAEGEMDGQAQPLTIPEREARVHEAFEYWSNLMNIPLSKLVYTTYREVESDVGKPKDAPIDTTRVVELAGKIGGGW</sequence>
<comment type="function">
    <text evidence="1">Component of the cytosolic Fe/S protein assembly machinery. Required for maturation of extramitochondrial Fe/S proteins. May play a role in the transfer of pre-assembled Fe/S clusters to target apoproteins (By similarity).</text>
</comment>
<comment type="similarity">
    <text evidence="4">Belongs to the NARF family.</text>
</comment>
<evidence type="ECO:0000250" key="1"/>
<evidence type="ECO:0000255" key="2"/>
<evidence type="ECO:0000256" key="3">
    <source>
        <dbReference type="SAM" id="MobiDB-lite"/>
    </source>
</evidence>
<evidence type="ECO:0000305" key="4"/>
<dbReference type="EMBL" id="BA000050">
    <property type="protein sequence ID" value="BAE58127.1"/>
    <property type="molecule type" value="Genomic_DNA"/>
</dbReference>
<dbReference type="RefSeq" id="XP_001820129.1">
    <property type="nucleotide sequence ID" value="XM_001820077.2"/>
</dbReference>
<dbReference type="STRING" id="510516.Q2UJY8"/>
<dbReference type="EnsemblFungi" id="BAE58127">
    <property type="protein sequence ID" value="BAE58127"/>
    <property type="gene ID" value="AO090003001020"/>
</dbReference>
<dbReference type="GeneID" id="5992112"/>
<dbReference type="KEGG" id="aor:AO090003001020"/>
<dbReference type="VEuPathDB" id="FungiDB:AO090003001020"/>
<dbReference type="HOGENOM" id="CLU_018240_0_1_1"/>
<dbReference type="OMA" id="GYLHHVL"/>
<dbReference type="OrthoDB" id="68000at5052"/>
<dbReference type="Proteomes" id="UP000006564">
    <property type="component" value="Chromosome 2"/>
</dbReference>
<dbReference type="GO" id="GO:0051539">
    <property type="term" value="F:4 iron, 4 sulfur cluster binding"/>
    <property type="evidence" value="ECO:0007669"/>
    <property type="project" value="UniProtKB-KW"/>
</dbReference>
<dbReference type="GO" id="GO:0051536">
    <property type="term" value="F:iron-sulfur cluster binding"/>
    <property type="evidence" value="ECO:0000250"/>
    <property type="project" value="UniProtKB"/>
</dbReference>
<dbReference type="GO" id="GO:0046872">
    <property type="term" value="F:metal ion binding"/>
    <property type="evidence" value="ECO:0007669"/>
    <property type="project" value="UniProtKB-KW"/>
</dbReference>
<dbReference type="GO" id="GO:0016226">
    <property type="term" value="P:iron-sulfur cluster assembly"/>
    <property type="evidence" value="ECO:0000250"/>
    <property type="project" value="UniProtKB"/>
</dbReference>
<dbReference type="FunFam" id="3.30.70.20:FF:000042">
    <property type="entry name" value="Cytosolic Fe-S cluster assembly factor NAR1"/>
    <property type="match status" value="1"/>
</dbReference>
<dbReference type="Gene3D" id="3.40.950.10">
    <property type="entry name" value="Fe-only Hydrogenase (Larger Subunit), Chain L, domain 3"/>
    <property type="match status" value="1"/>
</dbReference>
<dbReference type="InterPro" id="IPR050340">
    <property type="entry name" value="Cytosolic_Fe-S_CAF"/>
</dbReference>
<dbReference type="InterPro" id="IPR009016">
    <property type="entry name" value="Fe_hydrogenase"/>
</dbReference>
<dbReference type="InterPro" id="IPR004108">
    <property type="entry name" value="Fe_hydrogenase_lsu_C"/>
</dbReference>
<dbReference type="PANTHER" id="PTHR11615">
    <property type="entry name" value="NITRATE, FORMATE, IRON DEHYDROGENASE"/>
    <property type="match status" value="1"/>
</dbReference>
<dbReference type="Pfam" id="PF02906">
    <property type="entry name" value="Fe_hyd_lg_C"/>
    <property type="match status" value="1"/>
</dbReference>
<dbReference type="SUPFAM" id="SSF53920">
    <property type="entry name" value="Fe-only hydrogenase"/>
    <property type="match status" value="1"/>
</dbReference>
<proteinExistence type="inferred from homology"/>